<protein>
    <recommendedName>
        <fullName>S-locus-specific glycoprotein BS29-2</fullName>
    </recommendedName>
</protein>
<comment type="function">
    <text>Involved in sporophytic self-incompatibility system (the inability of flowering plants to achieve self-fertilization).</text>
</comment>
<comment type="tissue specificity">
    <text>Stigma.</text>
</comment>
<comment type="polymorphism">
    <text evidence="5">There are a total of 50 different S alleles in B.oleracea.</text>
</comment>
<keyword id="KW-1015">Disulfide bond</keyword>
<keyword id="KW-0325">Glycoprotein</keyword>
<keyword id="KW-0713">Self-incompatibility</keyword>
<keyword id="KW-0732">Signal</keyword>
<gene>
    <name type="primary">SLSG</name>
</gene>
<evidence type="ECO:0000250" key="1"/>
<evidence type="ECO:0000255" key="2"/>
<evidence type="ECO:0000255" key="3">
    <source>
        <dbReference type="PROSITE-ProRule" id="PRU00038"/>
    </source>
</evidence>
<evidence type="ECO:0000255" key="4">
    <source>
        <dbReference type="PROSITE-ProRule" id="PRU00315"/>
    </source>
</evidence>
<evidence type="ECO:0000305" key="5">
    <source>
    </source>
</evidence>
<name>SLSG2_BRAOA</name>
<organism>
    <name type="scientific">Brassica oleracea var. alboglabra</name>
    <name type="common">Chinese kale</name>
    <name type="synonym">Brassica alboglabra</name>
    <dbReference type="NCBI Taxonomy" id="3714"/>
    <lineage>
        <taxon>Eukaryota</taxon>
        <taxon>Viridiplantae</taxon>
        <taxon>Streptophyta</taxon>
        <taxon>Embryophyta</taxon>
        <taxon>Tracheophyta</taxon>
        <taxon>Spermatophyta</taxon>
        <taxon>Magnoliopsida</taxon>
        <taxon>eudicotyledons</taxon>
        <taxon>Gunneridae</taxon>
        <taxon>Pentapetalae</taxon>
        <taxon>rosids</taxon>
        <taxon>malvids</taxon>
        <taxon>Brassicales</taxon>
        <taxon>Brassicaceae</taxon>
        <taxon>Brassiceae</taxon>
        <taxon>Brassica</taxon>
    </lineage>
</organism>
<dbReference type="EMBL" id="X16123">
    <property type="protein sequence ID" value="CAA34254.1"/>
    <property type="molecule type" value="mRNA"/>
</dbReference>
<dbReference type="PIR" id="S04906">
    <property type="entry name" value="S04906"/>
</dbReference>
<dbReference type="SMR" id="P22553"/>
<dbReference type="GlyCosmos" id="P22553">
    <property type="glycosylation" value="5 sites, No reported glycans"/>
</dbReference>
<dbReference type="GO" id="GO:0060320">
    <property type="term" value="P:rejection of self pollen"/>
    <property type="evidence" value="ECO:0007669"/>
    <property type="project" value="UniProtKB-KW"/>
</dbReference>
<dbReference type="CDD" id="cd00028">
    <property type="entry name" value="B_lectin"/>
    <property type="match status" value="1"/>
</dbReference>
<dbReference type="CDD" id="cd01098">
    <property type="entry name" value="PAN_AP_plant"/>
    <property type="match status" value="1"/>
</dbReference>
<dbReference type="FunFam" id="2.90.10.10:FF:000047">
    <property type="entry name" value="Putative inactive G-type lectin S-receptor-like serine/threonine-protein kinase SRK"/>
    <property type="match status" value="1"/>
</dbReference>
<dbReference type="Gene3D" id="2.90.10.10">
    <property type="entry name" value="Bulb-type lectin domain"/>
    <property type="match status" value="1"/>
</dbReference>
<dbReference type="Gene3D" id="3.50.4.10">
    <property type="entry name" value="Hepatocyte Growth Factor"/>
    <property type="match status" value="1"/>
</dbReference>
<dbReference type="InterPro" id="IPR001480">
    <property type="entry name" value="Bulb-type_lectin_dom"/>
</dbReference>
<dbReference type="InterPro" id="IPR036426">
    <property type="entry name" value="Bulb-type_lectin_dom_sf"/>
</dbReference>
<dbReference type="InterPro" id="IPR003609">
    <property type="entry name" value="Pan_app"/>
</dbReference>
<dbReference type="InterPro" id="IPR000858">
    <property type="entry name" value="S_locus_glycoprot_dom"/>
</dbReference>
<dbReference type="InterPro" id="IPR035446">
    <property type="entry name" value="SLSG/EP1"/>
</dbReference>
<dbReference type="PANTHER" id="PTHR32444">
    <property type="entry name" value="BULB-TYPE LECTIN DOMAIN-CONTAINING PROTEIN"/>
    <property type="match status" value="1"/>
</dbReference>
<dbReference type="PANTHER" id="PTHR32444:SF251">
    <property type="entry name" value="INACTIVE G-TYPE LECTIN S-RECEPTOR-LIKE SERINE_THREONINE-PROTEIN KINASE SRK-RELATED"/>
    <property type="match status" value="1"/>
</dbReference>
<dbReference type="Pfam" id="PF01453">
    <property type="entry name" value="B_lectin"/>
    <property type="match status" value="1"/>
</dbReference>
<dbReference type="Pfam" id="PF08276">
    <property type="entry name" value="PAN_2"/>
    <property type="match status" value="1"/>
</dbReference>
<dbReference type="Pfam" id="PF00954">
    <property type="entry name" value="S_locus_glycop"/>
    <property type="match status" value="1"/>
</dbReference>
<dbReference type="PIRSF" id="PIRSF002686">
    <property type="entry name" value="SLG"/>
    <property type="match status" value="1"/>
</dbReference>
<dbReference type="SMART" id="SM00108">
    <property type="entry name" value="B_lectin"/>
    <property type="match status" value="1"/>
</dbReference>
<dbReference type="SMART" id="SM00473">
    <property type="entry name" value="PAN_AP"/>
    <property type="match status" value="1"/>
</dbReference>
<dbReference type="SUPFAM" id="SSF51110">
    <property type="entry name" value="alpha-D-mannose-specific plant lectins"/>
    <property type="match status" value="1"/>
</dbReference>
<dbReference type="PROSITE" id="PS50927">
    <property type="entry name" value="BULB_LECTIN"/>
    <property type="match status" value="1"/>
</dbReference>
<dbReference type="PROSITE" id="PS50948">
    <property type="entry name" value="PAN"/>
    <property type="match status" value="1"/>
</dbReference>
<proteinExistence type="evidence at transcript level"/>
<sequence length="435" mass="49543">MKGVGKPYENSHTSFLLVFFVLTLFSPAFSINTLSSIESLKISNSRTLVSPGNVLELGFFRTPSSSRWYLGMWYKKLSERTYVWVANRDNPLSCSIGTLKISNMNLVLLDHSNKSLWSTNHTRGNERSPVVAELLANGNFVLRDSNKNDRSGFLWQSFDYPTDTLLPEMKLGYDLRTGLNRFLTSWRSSDDPSSGDFSYKLQTRRLPEFYLFKDDFLVHRSGPWNGVGFSGMPEDQKLSYMVYNFTQNSEEVAYTFLMTNNSIYSRLTISSSGYFERLTWTPSSGMWNVFWSSPEDFQCDVYKICGAYSYCDVNTSPVCNCIQRFDPSNVQEWGLRAWSGGCRRRTRLSCSGDGFTRMKKMKLPETTMAIVDRSIGLKECEKRCLSDCNCTAFANADIRNGGTGCVIWTGQLEDIRTYFANGQDLYVRLAPADLV</sequence>
<feature type="signal peptide" evidence="2">
    <location>
        <begin position="1"/>
        <end position="30"/>
    </location>
</feature>
<feature type="chain" id="PRO_0000022363" description="S-locus-specific glycoprotein BS29-2">
    <location>
        <begin position="31"/>
        <end position="435"/>
    </location>
</feature>
<feature type="domain" description="Bulb-type lectin" evidence="3">
    <location>
        <begin position="33"/>
        <end position="155"/>
    </location>
</feature>
<feature type="domain" description="PAN" evidence="4">
    <location>
        <begin position="350"/>
        <end position="430"/>
    </location>
</feature>
<feature type="glycosylation site" description="N-linked (GlcNAc...) asparagine" evidence="2">
    <location>
        <position position="113"/>
    </location>
</feature>
<feature type="glycosylation site" description="N-linked (GlcNAc...) asparagine" evidence="2">
    <location>
        <position position="120"/>
    </location>
</feature>
<feature type="glycosylation site" description="N-linked (GlcNAc...) asparagine" evidence="2">
    <location>
        <position position="244"/>
    </location>
</feature>
<feature type="glycosylation site" description="N-linked (GlcNAc...) asparagine" evidence="2">
    <location>
        <position position="260"/>
    </location>
</feature>
<feature type="glycosylation site" description="N-linked (GlcNAc...) asparagine" evidence="2">
    <location>
        <position position="389"/>
    </location>
</feature>
<feature type="disulfide bond" evidence="1">
    <location>
        <begin position="380"/>
        <end position="405"/>
    </location>
</feature>
<feature type="disulfide bond" evidence="1">
    <location>
        <begin position="388"/>
        <end position="390"/>
    </location>
</feature>
<accession>P22553</accession>
<reference key="1">
    <citation type="journal article" date="1989" name="Mol. Gen. Genet.">
        <title>A homozygous S genotype of Brassica oleracea expresses two S-like genes.</title>
        <authorList>
            <person name="Trick M."/>
            <person name="Flavell R.B."/>
        </authorList>
    </citation>
    <scope>NUCLEOTIDE SEQUENCE [MRNA]</scope>
    <scope>POLYMORPHISM</scope>
</reference>